<keyword id="KW-0028">Amino-acid biosynthesis</keyword>
<keyword id="KW-0100">Branched-chain amino acid biosynthesis</keyword>
<keyword id="KW-0460">Magnesium</keyword>
<keyword id="KW-0479">Metal-binding</keyword>
<keyword id="KW-0521">NADP</keyword>
<keyword id="KW-0560">Oxidoreductase</keyword>
<keyword id="KW-1185">Reference proteome</keyword>
<evidence type="ECO:0000255" key="1">
    <source>
        <dbReference type="HAMAP-Rule" id="MF_00435"/>
    </source>
</evidence>
<evidence type="ECO:0000255" key="2">
    <source>
        <dbReference type="PROSITE-ProRule" id="PRU01197"/>
    </source>
</evidence>
<evidence type="ECO:0000255" key="3">
    <source>
        <dbReference type="PROSITE-ProRule" id="PRU01198"/>
    </source>
</evidence>
<gene>
    <name evidence="1" type="primary">ilvC</name>
    <name type="ordered locus">all2315</name>
</gene>
<sequence>MARMYYDEDANLDLLAGKTIAIIGYGSQGHAHALNLKDSGLNVIVGLYPGSKSAEKAQAAGLTVKNVADAANIADFIMILLPDEVQKTVYKNEIEPNLQEGNTLAFAHGFNIHFGQVVPPANVDVVMVAPKGPGHLVRRTYEQGQGVPALFAVYQDASGKARDRALSYAKGIGGTRGGVLETTFREETETDLFGEQAVLCGGLSALIKAGFETLVEAGYQPELAYFECLHEVKLIVDLVVEGGLAKMRDSISNTAEYGDYTRGPRIVNEQTKAEMRKVLSEIQSGQFAREFVLENQSGKPGFTAMRRQEAEHPIEEVGKDLRAMFSWLKKV</sequence>
<organism>
    <name type="scientific">Nostoc sp. (strain PCC 7120 / SAG 25.82 / UTEX 2576)</name>
    <dbReference type="NCBI Taxonomy" id="103690"/>
    <lineage>
        <taxon>Bacteria</taxon>
        <taxon>Bacillati</taxon>
        <taxon>Cyanobacteriota</taxon>
        <taxon>Cyanophyceae</taxon>
        <taxon>Nostocales</taxon>
        <taxon>Nostocaceae</taxon>
        <taxon>Nostoc</taxon>
    </lineage>
</organism>
<reference key="1">
    <citation type="journal article" date="2001" name="DNA Res.">
        <title>Complete genomic sequence of the filamentous nitrogen-fixing cyanobacterium Anabaena sp. strain PCC 7120.</title>
        <authorList>
            <person name="Kaneko T."/>
            <person name="Nakamura Y."/>
            <person name="Wolk C.P."/>
            <person name="Kuritz T."/>
            <person name="Sasamoto S."/>
            <person name="Watanabe A."/>
            <person name="Iriguchi M."/>
            <person name="Ishikawa A."/>
            <person name="Kawashima K."/>
            <person name="Kimura T."/>
            <person name="Kishida Y."/>
            <person name="Kohara M."/>
            <person name="Matsumoto M."/>
            <person name="Matsuno A."/>
            <person name="Muraki A."/>
            <person name="Nakazaki N."/>
            <person name="Shimpo S."/>
            <person name="Sugimoto M."/>
            <person name="Takazawa M."/>
            <person name="Yamada M."/>
            <person name="Yasuda M."/>
            <person name="Tabata S."/>
        </authorList>
    </citation>
    <scope>NUCLEOTIDE SEQUENCE [LARGE SCALE GENOMIC DNA]</scope>
    <source>
        <strain>PCC 7120 / SAG 25.82 / UTEX 2576</strain>
    </source>
</reference>
<comment type="function">
    <text evidence="1">Involved in the biosynthesis of branched-chain amino acids (BCAA). Catalyzes an alkyl-migration followed by a ketol-acid reduction of (S)-2-acetolactate (S2AL) to yield (R)-2,3-dihydroxy-isovalerate. In the isomerase reaction, S2AL is rearranged via a Mg-dependent methyl migration to produce 3-hydroxy-3-methyl-2-ketobutyrate (HMKB). In the reductase reaction, this 2-ketoacid undergoes a metal-dependent reduction by NADPH to yield (R)-2,3-dihydroxy-isovalerate.</text>
</comment>
<comment type="catalytic activity">
    <reaction evidence="1">
        <text>(2R)-2,3-dihydroxy-3-methylbutanoate + NADP(+) = (2S)-2-acetolactate + NADPH + H(+)</text>
        <dbReference type="Rhea" id="RHEA:22068"/>
        <dbReference type="ChEBI" id="CHEBI:15378"/>
        <dbReference type="ChEBI" id="CHEBI:49072"/>
        <dbReference type="ChEBI" id="CHEBI:57783"/>
        <dbReference type="ChEBI" id="CHEBI:58349"/>
        <dbReference type="ChEBI" id="CHEBI:58476"/>
        <dbReference type="EC" id="1.1.1.86"/>
    </reaction>
</comment>
<comment type="catalytic activity">
    <reaction evidence="1">
        <text>(2R,3R)-2,3-dihydroxy-3-methylpentanoate + NADP(+) = (S)-2-ethyl-2-hydroxy-3-oxobutanoate + NADPH + H(+)</text>
        <dbReference type="Rhea" id="RHEA:13493"/>
        <dbReference type="ChEBI" id="CHEBI:15378"/>
        <dbReference type="ChEBI" id="CHEBI:49256"/>
        <dbReference type="ChEBI" id="CHEBI:49258"/>
        <dbReference type="ChEBI" id="CHEBI:57783"/>
        <dbReference type="ChEBI" id="CHEBI:58349"/>
        <dbReference type="EC" id="1.1.1.86"/>
    </reaction>
</comment>
<comment type="cofactor">
    <cofactor evidence="1">
        <name>Mg(2+)</name>
        <dbReference type="ChEBI" id="CHEBI:18420"/>
    </cofactor>
    <text evidence="1">Binds 2 magnesium ions per subunit.</text>
</comment>
<comment type="pathway">
    <text evidence="1">Amino-acid biosynthesis; L-isoleucine biosynthesis; L-isoleucine from 2-oxobutanoate: step 2/4.</text>
</comment>
<comment type="pathway">
    <text evidence="1">Amino-acid biosynthesis; L-valine biosynthesis; L-valine from pyruvate: step 2/4.</text>
</comment>
<comment type="similarity">
    <text evidence="1">Belongs to the ketol-acid reductoisomerase family.</text>
</comment>
<dbReference type="EC" id="1.1.1.86" evidence="1"/>
<dbReference type="EMBL" id="BA000019">
    <property type="protein sequence ID" value="BAB74014.1"/>
    <property type="molecule type" value="Genomic_DNA"/>
</dbReference>
<dbReference type="PIR" id="AD2095">
    <property type="entry name" value="AD2095"/>
</dbReference>
<dbReference type="RefSeq" id="WP_010996471.1">
    <property type="nucleotide sequence ID" value="NZ_RSCN01000004.1"/>
</dbReference>
<dbReference type="SMR" id="Q8YUM5"/>
<dbReference type="STRING" id="103690.gene:10494344"/>
<dbReference type="KEGG" id="ana:all2315"/>
<dbReference type="eggNOG" id="COG0059">
    <property type="taxonomic scope" value="Bacteria"/>
</dbReference>
<dbReference type="OrthoDB" id="9804088at2"/>
<dbReference type="UniPathway" id="UPA00047">
    <property type="reaction ID" value="UER00056"/>
</dbReference>
<dbReference type="UniPathway" id="UPA00049">
    <property type="reaction ID" value="UER00060"/>
</dbReference>
<dbReference type="Proteomes" id="UP000002483">
    <property type="component" value="Chromosome"/>
</dbReference>
<dbReference type="GO" id="GO:0005829">
    <property type="term" value="C:cytosol"/>
    <property type="evidence" value="ECO:0007669"/>
    <property type="project" value="TreeGrafter"/>
</dbReference>
<dbReference type="GO" id="GO:0004455">
    <property type="term" value="F:ketol-acid reductoisomerase activity"/>
    <property type="evidence" value="ECO:0007669"/>
    <property type="project" value="UniProtKB-UniRule"/>
</dbReference>
<dbReference type="GO" id="GO:0000287">
    <property type="term" value="F:magnesium ion binding"/>
    <property type="evidence" value="ECO:0007669"/>
    <property type="project" value="UniProtKB-UniRule"/>
</dbReference>
<dbReference type="GO" id="GO:0050661">
    <property type="term" value="F:NADP binding"/>
    <property type="evidence" value="ECO:0007669"/>
    <property type="project" value="InterPro"/>
</dbReference>
<dbReference type="GO" id="GO:0009097">
    <property type="term" value="P:isoleucine biosynthetic process"/>
    <property type="evidence" value="ECO:0007669"/>
    <property type="project" value="UniProtKB-UniRule"/>
</dbReference>
<dbReference type="GO" id="GO:0009099">
    <property type="term" value="P:L-valine biosynthetic process"/>
    <property type="evidence" value="ECO:0007669"/>
    <property type="project" value="UniProtKB-UniRule"/>
</dbReference>
<dbReference type="FunFam" id="3.40.50.720:FF:000023">
    <property type="entry name" value="Ketol-acid reductoisomerase (NADP(+))"/>
    <property type="match status" value="1"/>
</dbReference>
<dbReference type="Gene3D" id="6.10.240.10">
    <property type="match status" value="1"/>
</dbReference>
<dbReference type="Gene3D" id="3.40.50.720">
    <property type="entry name" value="NAD(P)-binding Rossmann-like Domain"/>
    <property type="match status" value="1"/>
</dbReference>
<dbReference type="HAMAP" id="MF_00435">
    <property type="entry name" value="IlvC"/>
    <property type="match status" value="1"/>
</dbReference>
<dbReference type="InterPro" id="IPR008927">
    <property type="entry name" value="6-PGluconate_DH-like_C_sf"/>
</dbReference>
<dbReference type="InterPro" id="IPR013023">
    <property type="entry name" value="KARI"/>
</dbReference>
<dbReference type="InterPro" id="IPR000506">
    <property type="entry name" value="KARI_C"/>
</dbReference>
<dbReference type="InterPro" id="IPR013116">
    <property type="entry name" value="KARI_N"/>
</dbReference>
<dbReference type="InterPro" id="IPR014359">
    <property type="entry name" value="KARI_prok"/>
</dbReference>
<dbReference type="InterPro" id="IPR036291">
    <property type="entry name" value="NAD(P)-bd_dom_sf"/>
</dbReference>
<dbReference type="NCBIfam" id="TIGR00465">
    <property type="entry name" value="ilvC"/>
    <property type="match status" value="1"/>
</dbReference>
<dbReference type="NCBIfam" id="NF004017">
    <property type="entry name" value="PRK05479.1"/>
    <property type="match status" value="1"/>
</dbReference>
<dbReference type="NCBIfam" id="NF009940">
    <property type="entry name" value="PRK13403.1"/>
    <property type="match status" value="1"/>
</dbReference>
<dbReference type="PANTHER" id="PTHR21371">
    <property type="entry name" value="KETOL-ACID REDUCTOISOMERASE, MITOCHONDRIAL"/>
    <property type="match status" value="1"/>
</dbReference>
<dbReference type="PANTHER" id="PTHR21371:SF1">
    <property type="entry name" value="KETOL-ACID REDUCTOISOMERASE, MITOCHONDRIAL"/>
    <property type="match status" value="1"/>
</dbReference>
<dbReference type="Pfam" id="PF01450">
    <property type="entry name" value="KARI_C"/>
    <property type="match status" value="1"/>
</dbReference>
<dbReference type="Pfam" id="PF07991">
    <property type="entry name" value="KARI_N"/>
    <property type="match status" value="1"/>
</dbReference>
<dbReference type="PIRSF" id="PIRSF000116">
    <property type="entry name" value="IlvC_gammaproteo"/>
    <property type="match status" value="1"/>
</dbReference>
<dbReference type="SUPFAM" id="SSF48179">
    <property type="entry name" value="6-phosphogluconate dehydrogenase C-terminal domain-like"/>
    <property type="match status" value="1"/>
</dbReference>
<dbReference type="SUPFAM" id="SSF51735">
    <property type="entry name" value="NAD(P)-binding Rossmann-fold domains"/>
    <property type="match status" value="1"/>
</dbReference>
<dbReference type="PROSITE" id="PS51851">
    <property type="entry name" value="KARI_C"/>
    <property type="match status" value="1"/>
</dbReference>
<dbReference type="PROSITE" id="PS51850">
    <property type="entry name" value="KARI_N"/>
    <property type="match status" value="1"/>
</dbReference>
<proteinExistence type="inferred from homology"/>
<feature type="chain" id="PRO_0000151268" description="Ketol-acid reductoisomerase (NADP(+))">
    <location>
        <begin position="1"/>
        <end position="331"/>
    </location>
</feature>
<feature type="domain" description="KARI N-terminal Rossmann" evidence="2">
    <location>
        <begin position="2"/>
        <end position="182"/>
    </location>
</feature>
<feature type="domain" description="KARI C-terminal knotted" evidence="3">
    <location>
        <begin position="183"/>
        <end position="328"/>
    </location>
</feature>
<feature type="active site" evidence="1">
    <location>
        <position position="108"/>
    </location>
</feature>
<feature type="binding site" evidence="1">
    <location>
        <begin position="25"/>
        <end position="28"/>
    </location>
    <ligand>
        <name>NADP(+)</name>
        <dbReference type="ChEBI" id="CHEBI:58349"/>
    </ligand>
</feature>
<feature type="binding site" evidence="1">
    <location>
        <position position="51"/>
    </location>
    <ligand>
        <name>NADP(+)</name>
        <dbReference type="ChEBI" id="CHEBI:58349"/>
    </ligand>
</feature>
<feature type="binding site" evidence="1">
    <location>
        <position position="53"/>
    </location>
    <ligand>
        <name>NADP(+)</name>
        <dbReference type="ChEBI" id="CHEBI:58349"/>
    </ligand>
</feature>
<feature type="binding site" evidence="1">
    <location>
        <begin position="83"/>
        <end position="86"/>
    </location>
    <ligand>
        <name>NADP(+)</name>
        <dbReference type="ChEBI" id="CHEBI:58349"/>
    </ligand>
</feature>
<feature type="binding site" evidence="1">
    <location>
        <position position="134"/>
    </location>
    <ligand>
        <name>NADP(+)</name>
        <dbReference type="ChEBI" id="CHEBI:58349"/>
    </ligand>
</feature>
<feature type="binding site" evidence="1">
    <location>
        <position position="191"/>
    </location>
    <ligand>
        <name>Mg(2+)</name>
        <dbReference type="ChEBI" id="CHEBI:18420"/>
        <label>1</label>
    </ligand>
</feature>
<feature type="binding site" evidence="1">
    <location>
        <position position="191"/>
    </location>
    <ligand>
        <name>Mg(2+)</name>
        <dbReference type="ChEBI" id="CHEBI:18420"/>
        <label>2</label>
    </ligand>
</feature>
<feature type="binding site" evidence="1">
    <location>
        <position position="195"/>
    </location>
    <ligand>
        <name>Mg(2+)</name>
        <dbReference type="ChEBI" id="CHEBI:18420"/>
        <label>1</label>
    </ligand>
</feature>
<feature type="binding site" evidence="1">
    <location>
        <position position="227"/>
    </location>
    <ligand>
        <name>Mg(2+)</name>
        <dbReference type="ChEBI" id="CHEBI:18420"/>
        <label>2</label>
    </ligand>
</feature>
<feature type="binding site" evidence="1">
    <location>
        <position position="231"/>
    </location>
    <ligand>
        <name>Mg(2+)</name>
        <dbReference type="ChEBI" id="CHEBI:18420"/>
        <label>2</label>
    </ligand>
</feature>
<feature type="binding site" evidence="1">
    <location>
        <position position="252"/>
    </location>
    <ligand>
        <name>substrate</name>
    </ligand>
</feature>
<name>ILVC_NOSS1</name>
<protein>
    <recommendedName>
        <fullName evidence="1">Ketol-acid reductoisomerase (NADP(+))</fullName>
        <shortName evidence="1">KARI</shortName>
        <ecNumber evidence="1">1.1.1.86</ecNumber>
    </recommendedName>
    <alternativeName>
        <fullName evidence="1">Acetohydroxy-acid isomeroreductase</fullName>
        <shortName evidence="1">AHIR</shortName>
    </alternativeName>
    <alternativeName>
        <fullName evidence="1">Alpha-keto-beta-hydroxylacyl reductoisomerase</fullName>
    </alternativeName>
    <alternativeName>
        <fullName evidence="1">Ketol-acid reductoisomerase type 1</fullName>
    </alternativeName>
    <alternativeName>
        <fullName evidence="1">Ketol-acid reductoisomerase type I</fullName>
    </alternativeName>
</protein>
<accession>Q8YUM5</accession>